<gene>
    <name evidence="1" type="primary">PGAP4</name>
    <name type="synonym">TMEM246</name>
</gene>
<feature type="chain" id="PRO_0000089733" description="GPI-N-acetylgalactosamine transferase PGAP4">
    <location>
        <begin position="1"/>
        <end position="403"/>
    </location>
</feature>
<feature type="topological domain" description="Cytoplasmic" evidence="1">
    <location>
        <begin position="1"/>
        <end position="22"/>
    </location>
</feature>
<feature type="transmembrane region" description="Helical" evidence="2">
    <location>
        <begin position="23"/>
        <end position="43"/>
    </location>
</feature>
<feature type="topological domain" description="Lumenal" evidence="1">
    <location>
        <begin position="44"/>
        <end position="259"/>
    </location>
</feature>
<feature type="transmembrane region" description="Helical" evidence="2">
    <location>
        <begin position="260"/>
        <end position="280"/>
    </location>
</feature>
<feature type="topological domain" description="Cytoplasmic" evidence="1">
    <location>
        <begin position="281"/>
        <end position="287"/>
    </location>
</feature>
<feature type="transmembrane region" description="Helical" evidence="2">
    <location>
        <begin position="288"/>
        <end position="308"/>
    </location>
</feature>
<feature type="topological domain" description="Lumenal" evidence="1">
    <location>
        <begin position="309"/>
        <end position="403"/>
    </location>
</feature>
<feature type="short sequence motif" description="DXD motif" evidence="1">
    <location>
        <begin position="211"/>
        <end position="213"/>
    </location>
</feature>
<feature type="binding site" evidence="1">
    <location>
        <position position="109"/>
    </location>
    <ligand>
        <name>UDP-N-acetyl-alpha-D-galactosamine</name>
        <dbReference type="ChEBI" id="CHEBI:67138"/>
    </ligand>
</feature>
<feature type="binding site" evidence="1">
    <location>
        <position position="334"/>
    </location>
    <ligand>
        <name>UDP-N-acetyl-alpha-D-galactosamine</name>
        <dbReference type="ChEBI" id="CHEBI:67138"/>
    </ligand>
</feature>
<feature type="binding site" evidence="1">
    <location>
        <position position="335"/>
    </location>
    <ligand>
        <name>UDP-N-acetyl-alpha-D-galactosamine</name>
        <dbReference type="ChEBI" id="CHEBI:67138"/>
    </ligand>
</feature>
<feature type="binding site" evidence="1">
    <location>
        <position position="362"/>
    </location>
    <ligand>
        <name>UDP-N-acetyl-alpha-D-galactosamine</name>
        <dbReference type="ChEBI" id="CHEBI:67138"/>
    </ligand>
</feature>
<feature type="disulfide bond" evidence="1">
    <location>
        <begin position="132"/>
        <end position="136"/>
    </location>
</feature>
<feature type="disulfide bond" evidence="1">
    <location>
        <begin position="144"/>
        <end position="194"/>
    </location>
</feature>
<feature type="disulfide bond" evidence="1">
    <location>
        <begin position="332"/>
        <end position="333"/>
    </location>
</feature>
<evidence type="ECO:0000250" key="1">
    <source>
        <dbReference type="UniProtKB" id="Q9BRR3"/>
    </source>
</evidence>
<evidence type="ECO:0000255" key="2"/>
<evidence type="ECO:0000305" key="3"/>
<dbReference type="EC" id="2.4.1.-" evidence="1"/>
<dbReference type="EMBL" id="CR859886">
    <property type="protein sequence ID" value="CAH92042.1"/>
    <property type="molecule type" value="mRNA"/>
</dbReference>
<dbReference type="RefSeq" id="NP_001126187.1">
    <property type="nucleotide sequence ID" value="NM_001132715.1"/>
</dbReference>
<dbReference type="FunCoup" id="Q5R868">
    <property type="interactions" value="407"/>
</dbReference>
<dbReference type="GeneID" id="100173151"/>
<dbReference type="KEGG" id="pon:100173151"/>
<dbReference type="CTD" id="84302"/>
<dbReference type="eggNOG" id="ENOG502QT3K">
    <property type="taxonomic scope" value="Eukaryota"/>
</dbReference>
<dbReference type="InParanoid" id="Q5R868"/>
<dbReference type="OrthoDB" id="2016523at2759"/>
<dbReference type="Proteomes" id="UP000001595">
    <property type="component" value="Unplaced"/>
</dbReference>
<dbReference type="GO" id="GO:0000139">
    <property type="term" value="C:Golgi membrane"/>
    <property type="evidence" value="ECO:0000250"/>
    <property type="project" value="UniProtKB"/>
</dbReference>
<dbReference type="GO" id="GO:0016757">
    <property type="term" value="F:glycosyltransferase activity"/>
    <property type="evidence" value="ECO:0000250"/>
    <property type="project" value="UniProtKB"/>
</dbReference>
<dbReference type="GO" id="GO:0006506">
    <property type="term" value="P:GPI anchor biosynthetic process"/>
    <property type="evidence" value="ECO:0000250"/>
    <property type="project" value="UniProtKB"/>
</dbReference>
<dbReference type="CDD" id="cd22190">
    <property type="entry name" value="PGAP4"/>
    <property type="match status" value="1"/>
</dbReference>
<dbReference type="InterPro" id="IPR029675">
    <property type="entry name" value="PGAP4"/>
</dbReference>
<dbReference type="PANTHER" id="PTHR31410:SF1">
    <property type="entry name" value="POST-GPI ATTACHMENT TO PROTEINS FACTOR 4"/>
    <property type="match status" value="1"/>
</dbReference>
<dbReference type="PANTHER" id="PTHR31410">
    <property type="entry name" value="TRANSMEMBRANE PROTEIN 246"/>
    <property type="match status" value="1"/>
</dbReference>
<protein>
    <recommendedName>
        <fullName evidence="1">GPI-N-acetylgalactosamine transferase PGAP4</fullName>
        <shortName evidence="1">GPI-GalNAc transferase PGAP4</shortName>
        <ecNumber evidence="1">2.4.1.-</ecNumber>
    </recommendedName>
    <alternativeName>
        <fullName evidence="3">Post-GPI attachment to proteins GalNAc transferase 4</fullName>
    </alternativeName>
    <alternativeName>
        <fullName evidence="3">Post-GPI attachment to proteins factor 4</fullName>
    </alternativeName>
    <alternativeName>
        <fullName>Transmembrane protein 246</fullName>
    </alternativeName>
</protein>
<proteinExistence type="evidence at transcript level"/>
<accession>Q5R868</accession>
<name>PGAP4_PONAB</name>
<keyword id="KW-1015">Disulfide bond</keyword>
<keyword id="KW-0333">Golgi apparatus</keyword>
<keyword id="KW-0472">Membrane</keyword>
<keyword id="KW-1185">Reference proteome</keyword>
<keyword id="KW-0808">Transferase</keyword>
<keyword id="KW-0812">Transmembrane</keyword>
<keyword id="KW-1133">Transmembrane helix</keyword>
<reference key="1">
    <citation type="submission" date="2004-11" db="EMBL/GenBank/DDBJ databases">
        <authorList>
            <consortium name="The German cDNA consortium"/>
        </authorList>
    </citation>
    <scope>NUCLEOTIDE SEQUENCE [LARGE SCALE MRNA]</scope>
    <source>
        <tissue>Kidney</tissue>
    </source>
</reference>
<sequence>MSTSTSPAAMLLRRLRRLSWGSTAVQLFILTVVTFGLLAPLACHRLLHSYFYLRHWHLNQMSQEFLQQSLKEGEAALHYFEELPSANGSVPIVWQATPRPWLVITIITVDRQPGFHYVLQVVSQFHRLLQQCGPQCEGHQLFLCNVERSVSHFDAKLLSKYVPVANRYEGTEDDYGDDPSTNSFEKEKQDYVYCLESSLQTYNPDYVLMVEDDAVPEEQIFPVLEHLLRARFSEPHLRDALYLKLYHPERLQHYTNPEPMRILEWVGVGMLLGPLLTWIYMRFASRPGFSWPVMLFFSLYSMGLVELVGRHYFLELRRLSPSLYSVVPASQCCTPAMLFPAPAARRTLTYLSQVYCHKGFGKDMALYSLLRAKGERAYVVEPNLVKHIGLFSSLRYNFHPSLL</sequence>
<comment type="function">
    <text evidence="1">Golgi-resident glycosylphosphatidylinositol (GPI)-N-acetylgalactosamine transferase that catalyzes the N-acetyl-beta-D-galactosamine transfer from an UDP-N-acetyl-alpha-D-galactosamine to the 4-OH-position of first mannose of the glycosylphosphatidylinositol (GPI) of a GPI-anchored protein (GPI-AP). This modification occurs after the fatty acid remodeling step of the GPI-anchor maturation.</text>
</comment>
<comment type="subcellular location">
    <subcellularLocation>
        <location evidence="1">Golgi apparatus membrane</location>
        <topology evidence="2">Multi-pass membrane protein</topology>
    </subcellularLocation>
</comment>
<comment type="domain">
    <text evidence="1">Contains three transmembrane domains, including a tandem transmembrane domain insertion into its glycosyltransferase-A fold. Transmembrane domain 1 functions as a signal for Golgi targeting.</text>
</comment>
<comment type="domain">
    <text evidence="1">The conserved DXD motif is involved in enzyme activity.</text>
</comment>
<comment type="PTM">
    <text evidence="1">Glycosylated.</text>
</comment>
<comment type="similarity">
    <text evidence="3">Belongs to the PGAP4 family.</text>
</comment>
<organism>
    <name type="scientific">Pongo abelii</name>
    <name type="common">Sumatran orangutan</name>
    <name type="synonym">Pongo pygmaeus abelii</name>
    <dbReference type="NCBI Taxonomy" id="9601"/>
    <lineage>
        <taxon>Eukaryota</taxon>
        <taxon>Metazoa</taxon>
        <taxon>Chordata</taxon>
        <taxon>Craniata</taxon>
        <taxon>Vertebrata</taxon>
        <taxon>Euteleostomi</taxon>
        <taxon>Mammalia</taxon>
        <taxon>Eutheria</taxon>
        <taxon>Euarchontoglires</taxon>
        <taxon>Primates</taxon>
        <taxon>Haplorrhini</taxon>
        <taxon>Catarrhini</taxon>
        <taxon>Hominidae</taxon>
        <taxon>Pongo</taxon>
    </lineage>
</organism>